<dbReference type="EMBL" id="CP000057">
    <property type="protein sequence ID" value="AAX88449.1"/>
    <property type="molecule type" value="Genomic_DNA"/>
</dbReference>
<dbReference type="RefSeq" id="WP_005628925.1">
    <property type="nucleotide sequence ID" value="NC_007146.2"/>
</dbReference>
<dbReference type="SMR" id="Q4QKJ8"/>
<dbReference type="GeneID" id="93297395"/>
<dbReference type="KEGG" id="hit:NTHI1652"/>
<dbReference type="HOGENOM" id="CLU_148518_0_0_6"/>
<dbReference type="Proteomes" id="UP000002525">
    <property type="component" value="Chromosome"/>
</dbReference>
<dbReference type="GO" id="GO:0022627">
    <property type="term" value="C:cytosolic small ribosomal subunit"/>
    <property type="evidence" value="ECO:0007669"/>
    <property type="project" value="TreeGrafter"/>
</dbReference>
<dbReference type="GO" id="GO:0019843">
    <property type="term" value="F:rRNA binding"/>
    <property type="evidence" value="ECO:0007669"/>
    <property type="project" value="UniProtKB-UniRule"/>
</dbReference>
<dbReference type="GO" id="GO:0003735">
    <property type="term" value="F:structural constituent of ribosome"/>
    <property type="evidence" value="ECO:0007669"/>
    <property type="project" value="InterPro"/>
</dbReference>
<dbReference type="GO" id="GO:0006412">
    <property type="term" value="P:translation"/>
    <property type="evidence" value="ECO:0007669"/>
    <property type="project" value="UniProtKB-UniRule"/>
</dbReference>
<dbReference type="CDD" id="cd00353">
    <property type="entry name" value="Ribosomal_S15p_S13e"/>
    <property type="match status" value="1"/>
</dbReference>
<dbReference type="FunFam" id="1.10.287.10:FF:000002">
    <property type="entry name" value="30S ribosomal protein S15"/>
    <property type="match status" value="1"/>
</dbReference>
<dbReference type="Gene3D" id="6.10.250.3130">
    <property type="match status" value="1"/>
</dbReference>
<dbReference type="Gene3D" id="1.10.287.10">
    <property type="entry name" value="S15/NS1, RNA-binding"/>
    <property type="match status" value="1"/>
</dbReference>
<dbReference type="HAMAP" id="MF_01343_B">
    <property type="entry name" value="Ribosomal_uS15_B"/>
    <property type="match status" value="1"/>
</dbReference>
<dbReference type="InterPro" id="IPR000589">
    <property type="entry name" value="Ribosomal_uS15"/>
</dbReference>
<dbReference type="InterPro" id="IPR005290">
    <property type="entry name" value="Ribosomal_uS15_bac-type"/>
</dbReference>
<dbReference type="InterPro" id="IPR009068">
    <property type="entry name" value="uS15_NS1_RNA-bd_sf"/>
</dbReference>
<dbReference type="NCBIfam" id="TIGR00952">
    <property type="entry name" value="S15_bact"/>
    <property type="match status" value="1"/>
</dbReference>
<dbReference type="PANTHER" id="PTHR23321">
    <property type="entry name" value="RIBOSOMAL PROTEIN S15, BACTERIAL AND ORGANELLAR"/>
    <property type="match status" value="1"/>
</dbReference>
<dbReference type="PANTHER" id="PTHR23321:SF26">
    <property type="entry name" value="SMALL RIBOSOMAL SUBUNIT PROTEIN US15M"/>
    <property type="match status" value="1"/>
</dbReference>
<dbReference type="Pfam" id="PF00312">
    <property type="entry name" value="Ribosomal_S15"/>
    <property type="match status" value="1"/>
</dbReference>
<dbReference type="SMART" id="SM01387">
    <property type="entry name" value="Ribosomal_S15"/>
    <property type="match status" value="1"/>
</dbReference>
<dbReference type="SUPFAM" id="SSF47060">
    <property type="entry name" value="S15/NS1 RNA-binding domain"/>
    <property type="match status" value="1"/>
</dbReference>
<dbReference type="PROSITE" id="PS00362">
    <property type="entry name" value="RIBOSOMAL_S15"/>
    <property type="match status" value="1"/>
</dbReference>
<organism>
    <name type="scientific">Haemophilus influenzae (strain 86-028NP)</name>
    <dbReference type="NCBI Taxonomy" id="281310"/>
    <lineage>
        <taxon>Bacteria</taxon>
        <taxon>Pseudomonadati</taxon>
        <taxon>Pseudomonadota</taxon>
        <taxon>Gammaproteobacteria</taxon>
        <taxon>Pasteurellales</taxon>
        <taxon>Pasteurellaceae</taxon>
        <taxon>Haemophilus</taxon>
    </lineage>
</organism>
<accession>Q4QKJ8</accession>
<gene>
    <name evidence="1" type="primary">rpsO</name>
    <name type="ordered locus">NTHI1652</name>
</gene>
<name>RS15_HAEI8</name>
<keyword id="KW-0687">Ribonucleoprotein</keyword>
<keyword id="KW-0689">Ribosomal protein</keyword>
<keyword id="KW-0694">RNA-binding</keyword>
<keyword id="KW-0699">rRNA-binding</keyword>
<sequence>MSLSTEKKAAIVAEFGRDAKDTGSSEVQIALLTAQINHLQAHFAEHKKDHHGRRGLLRMVSRRRKLLDYLKRTDLALYQSTIARLGLRR</sequence>
<evidence type="ECO:0000255" key="1">
    <source>
        <dbReference type="HAMAP-Rule" id="MF_01343"/>
    </source>
</evidence>
<evidence type="ECO:0000305" key="2"/>
<feature type="chain" id="PRO_0000115448" description="Small ribosomal subunit protein uS15">
    <location>
        <begin position="1"/>
        <end position="89"/>
    </location>
</feature>
<proteinExistence type="inferred from homology"/>
<reference key="1">
    <citation type="journal article" date="2005" name="J. Bacteriol.">
        <title>Genomic sequence of an otitis media isolate of nontypeable Haemophilus influenzae: comparative study with H. influenzae serotype d, strain KW20.</title>
        <authorList>
            <person name="Harrison A."/>
            <person name="Dyer D.W."/>
            <person name="Gillaspy A."/>
            <person name="Ray W.C."/>
            <person name="Mungur R."/>
            <person name="Carson M.B."/>
            <person name="Zhong H."/>
            <person name="Gipson J."/>
            <person name="Gipson M."/>
            <person name="Johnson L.S."/>
            <person name="Lewis L."/>
            <person name="Bakaletz L.O."/>
            <person name="Munson R.S. Jr."/>
        </authorList>
    </citation>
    <scope>NUCLEOTIDE SEQUENCE [LARGE SCALE GENOMIC DNA]</scope>
    <source>
        <strain>86-028NP</strain>
    </source>
</reference>
<comment type="function">
    <text evidence="1">One of the primary rRNA binding proteins, it binds directly to 16S rRNA where it helps nucleate assembly of the platform of the 30S subunit by binding and bridging several RNA helices of the 16S rRNA.</text>
</comment>
<comment type="function">
    <text evidence="1">Forms an intersubunit bridge (bridge B4) with the 23S rRNA of the 50S subunit in the ribosome.</text>
</comment>
<comment type="subunit">
    <text evidence="1">Part of the 30S ribosomal subunit. Forms a bridge to the 50S subunit in the 70S ribosome, contacting the 23S rRNA.</text>
</comment>
<comment type="similarity">
    <text evidence="1">Belongs to the universal ribosomal protein uS15 family.</text>
</comment>
<protein>
    <recommendedName>
        <fullName evidence="1">Small ribosomal subunit protein uS15</fullName>
    </recommendedName>
    <alternativeName>
        <fullName evidence="2">30S ribosomal protein S15</fullName>
    </alternativeName>
</protein>